<reference key="1">
    <citation type="journal article" date="2002" name="Proc. Natl. Acad. Sci. U.S.A.">
        <title>The genome sequence of Bifidobacterium longum reflects its adaptation to the human gastrointestinal tract.</title>
        <authorList>
            <person name="Schell M.A."/>
            <person name="Karmirantzou M."/>
            <person name="Snel B."/>
            <person name="Vilanova D."/>
            <person name="Berger B."/>
            <person name="Pessi G."/>
            <person name="Zwahlen M.-C."/>
            <person name="Desiere F."/>
            <person name="Bork P."/>
            <person name="Delley M."/>
            <person name="Pridmore R.D."/>
            <person name="Arigoni F."/>
        </authorList>
    </citation>
    <scope>NUCLEOTIDE SEQUENCE [LARGE SCALE GENOMIC DNA]</scope>
    <source>
        <strain>NCC 2705</strain>
    </source>
</reference>
<reference key="2">
    <citation type="journal article" date="2012" name="Anaerobe">
        <title>Identification and characterization of WhiB-like family proteins of the Bifidobacterium genus.</title>
        <authorList>
            <person name="Averina O.V."/>
            <person name="Zakharevich N.V."/>
            <person name="Danilenko V.N."/>
        </authorList>
    </citation>
    <scope>INDUCTION</scope>
    <source>
        <strain>B 397M</strain>
    </source>
</reference>
<dbReference type="EMBL" id="AE014295">
    <property type="protein sequence ID" value="AAN24819.1"/>
    <property type="molecule type" value="Genomic_DNA"/>
</dbReference>
<dbReference type="RefSeq" id="NP_696183.1">
    <property type="nucleotide sequence ID" value="NC_004307.2"/>
</dbReference>
<dbReference type="RefSeq" id="WP_003835265.1">
    <property type="nucleotide sequence ID" value="NC_004307.2"/>
</dbReference>
<dbReference type="SMR" id="Q8G5J9"/>
<dbReference type="STRING" id="206672.BL1011"/>
<dbReference type="EnsemblBacteria" id="AAN24819">
    <property type="protein sequence ID" value="AAN24819"/>
    <property type="gene ID" value="BL1011"/>
</dbReference>
<dbReference type="KEGG" id="blo:BL1011"/>
<dbReference type="PATRIC" id="fig|206672.9.peg.715"/>
<dbReference type="HOGENOM" id="CLU_106245_6_2_11"/>
<dbReference type="OrthoDB" id="8104048at2"/>
<dbReference type="PhylomeDB" id="Q8G5J9"/>
<dbReference type="PRO" id="PR:Q8G5J9"/>
<dbReference type="Proteomes" id="UP000000439">
    <property type="component" value="Chromosome"/>
</dbReference>
<dbReference type="GO" id="GO:0005737">
    <property type="term" value="C:cytoplasm"/>
    <property type="evidence" value="ECO:0007669"/>
    <property type="project" value="UniProtKB-SubCell"/>
</dbReference>
<dbReference type="GO" id="GO:0051539">
    <property type="term" value="F:4 iron, 4 sulfur cluster binding"/>
    <property type="evidence" value="ECO:0007669"/>
    <property type="project" value="UniProtKB-UniRule"/>
</dbReference>
<dbReference type="GO" id="GO:0035731">
    <property type="term" value="F:dinitrosyl-iron complex binding"/>
    <property type="evidence" value="ECO:0007669"/>
    <property type="project" value="UniProtKB-UniRule"/>
</dbReference>
<dbReference type="GO" id="GO:0003677">
    <property type="term" value="F:DNA binding"/>
    <property type="evidence" value="ECO:0007669"/>
    <property type="project" value="UniProtKB-UniRule"/>
</dbReference>
<dbReference type="GO" id="GO:0046872">
    <property type="term" value="F:metal ion binding"/>
    <property type="evidence" value="ECO:0007669"/>
    <property type="project" value="UniProtKB-KW"/>
</dbReference>
<dbReference type="GO" id="GO:0047134">
    <property type="term" value="F:protein-disulfide reductase [NAD(P)H] activity"/>
    <property type="evidence" value="ECO:0007669"/>
    <property type="project" value="TreeGrafter"/>
</dbReference>
<dbReference type="GO" id="GO:0045454">
    <property type="term" value="P:cell redox homeostasis"/>
    <property type="evidence" value="ECO:0007669"/>
    <property type="project" value="TreeGrafter"/>
</dbReference>
<dbReference type="GO" id="GO:0045892">
    <property type="term" value="P:negative regulation of DNA-templated transcription"/>
    <property type="evidence" value="ECO:0007669"/>
    <property type="project" value="TreeGrafter"/>
</dbReference>
<dbReference type="HAMAP" id="MF_01479">
    <property type="entry name" value="WhiB"/>
    <property type="match status" value="1"/>
</dbReference>
<dbReference type="InterPro" id="IPR034768">
    <property type="entry name" value="4FE4S_WBL"/>
</dbReference>
<dbReference type="InterPro" id="IPR003482">
    <property type="entry name" value="Whib"/>
</dbReference>
<dbReference type="PANTHER" id="PTHR38839:SF6">
    <property type="entry name" value="TRANSCRIPTIONAL REGULATOR WHIB1"/>
    <property type="match status" value="1"/>
</dbReference>
<dbReference type="PANTHER" id="PTHR38839">
    <property type="entry name" value="TRANSCRIPTIONAL REGULATOR WHID-RELATED"/>
    <property type="match status" value="1"/>
</dbReference>
<dbReference type="Pfam" id="PF02467">
    <property type="entry name" value="Whib"/>
    <property type="match status" value="1"/>
</dbReference>
<dbReference type="PROSITE" id="PS51674">
    <property type="entry name" value="4FE4S_WBL"/>
    <property type="match status" value="1"/>
</dbReference>
<protein>
    <recommendedName>
        <fullName>Transcriptional regulator WhiB1</fullName>
    </recommendedName>
</protein>
<evidence type="ECO:0000250" key="1"/>
<evidence type="ECO:0000269" key="2">
    <source>
    </source>
</evidence>
<evidence type="ECO:0000305" key="3"/>
<accession>Q8G5J9</accession>
<name>WHIB1_BIFLO</name>
<organism>
    <name type="scientific">Bifidobacterium longum (strain NCC 2705)</name>
    <dbReference type="NCBI Taxonomy" id="206672"/>
    <lineage>
        <taxon>Bacteria</taxon>
        <taxon>Bacillati</taxon>
        <taxon>Actinomycetota</taxon>
        <taxon>Actinomycetes</taxon>
        <taxon>Bifidobacteriales</taxon>
        <taxon>Bifidobacteriaceae</taxon>
        <taxon>Bifidobacterium</taxon>
    </lineage>
</organism>
<gene>
    <name type="primary">whiB1</name>
    <name type="synonym">wblE</name>
    <name type="ordered locus">BL1011</name>
</gene>
<proteinExistence type="evidence at transcript level"/>
<comment type="function">
    <text evidence="1">Acts as a transcriptional regulator. Probably redox-responsive. The apo- but not holo-form probably binds DNA (By similarity).</text>
</comment>
<comment type="cofactor">
    <cofactor evidence="1">
        <name>[4Fe-4S] cluster</name>
        <dbReference type="ChEBI" id="CHEBI:49883"/>
    </cofactor>
    <text evidence="1">Binds 1 [4Fe-4S] cluster per subunit. Following nitrosylation of the [4Fe-4S] cluster binds 1 [4Fe-8(NO)] cluster per subunit.</text>
</comment>
<comment type="subcellular location">
    <subcellularLocation>
        <location evidence="1">Cytoplasm</location>
    </subcellularLocation>
</comment>
<comment type="induction">
    <text evidence="2">Low level expression in exponential phase it increases about 8-fold by late stationary phase. Induced by heat (45 degrees Celsius) osmotic and oxidative stress, nutrient starvation, tetracycline, and bile salts.</text>
</comment>
<comment type="PTM">
    <text evidence="1">The Fe-S cluster can be nitrosylated by nitric oxide (NO).</text>
</comment>
<comment type="PTM">
    <text evidence="1">Upon Fe-S cluster removal intramolecular disulfide bonds are formed.</text>
</comment>
<comment type="similarity">
    <text evidence="3">Belongs to the WhiB family.</text>
</comment>
<feature type="chain" id="PRO_0000420389" description="Transcriptional regulator WhiB1">
    <location>
        <begin position="1"/>
        <end position="92"/>
    </location>
</feature>
<feature type="domain" description="4Fe-4S Wbl-type">
    <location>
        <begin position="12"/>
        <end position="74"/>
    </location>
</feature>
<feature type="binding site" evidence="1">
    <location>
        <position position="13"/>
    </location>
    <ligand>
        <name>[4Fe-4S] cluster</name>
        <dbReference type="ChEBI" id="CHEBI:49883"/>
    </ligand>
</feature>
<feature type="binding site" evidence="1">
    <location>
        <position position="41"/>
    </location>
    <ligand>
        <name>[4Fe-4S] cluster</name>
        <dbReference type="ChEBI" id="CHEBI:49883"/>
    </ligand>
</feature>
<feature type="binding site" evidence="1">
    <location>
        <position position="44"/>
    </location>
    <ligand>
        <name>[4Fe-4S] cluster</name>
        <dbReference type="ChEBI" id="CHEBI:49883"/>
    </ligand>
</feature>
<feature type="binding site" evidence="1">
    <location>
        <position position="50"/>
    </location>
    <ligand>
        <name>[4Fe-4S] cluster</name>
        <dbReference type="ChEBI" id="CHEBI:49883"/>
    </ligand>
</feature>
<keyword id="KW-0004">4Fe-4S</keyword>
<keyword id="KW-0963">Cytoplasm</keyword>
<keyword id="KW-1015">Disulfide bond</keyword>
<keyword id="KW-0238">DNA-binding</keyword>
<keyword id="KW-0408">Iron</keyword>
<keyword id="KW-0411">Iron-sulfur</keyword>
<keyword id="KW-0479">Metal-binding</keyword>
<keyword id="KW-1185">Reference proteome</keyword>
<keyword id="KW-0804">Transcription</keyword>
<keyword id="KW-0805">Transcription regulation</keyword>
<sequence>MSSAFDWRAKAACRDKDPELFFPVGNTGAAYQQIEEAKAVCRTCKVIDACLKCALDTNQDYGVWGGLSEDERRALKRRAMRARRSQAMQMQI</sequence>